<proteinExistence type="inferred from homology"/>
<geneLocation type="chloroplast"/>
<evidence type="ECO:0000255" key="1">
    <source>
        <dbReference type="HAMAP-Rule" id="MF_01390"/>
    </source>
</evidence>
<name>MATK_AMBCE</name>
<feature type="chain" id="PRO_0000143227" description="Maturase K">
    <location>
        <begin position="1"/>
        <end position="508"/>
    </location>
</feature>
<dbReference type="EMBL" id="AY553712">
    <property type="protein sequence ID" value="AAS64352.1"/>
    <property type="molecule type" value="Genomic_DNA"/>
</dbReference>
<dbReference type="RefSeq" id="YP_010511958.1">
    <property type="nucleotide sequence ID" value="NC_067514.1"/>
</dbReference>
<dbReference type="GeneID" id="76305830"/>
<dbReference type="GO" id="GO:0009507">
    <property type="term" value="C:chloroplast"/>
    <property type="evidence" value="ECO:0007669"/>
    <property type="project" value="UniProtKB-SubCell"/>
</dbReference>
<dbReference type="GO" id="GO:0003723">
    <property type="term" value="F:RNA binding"/>
    <property type="evidence" value="ECO:0007669"/>
    <property type="project" value="UniProtKB-KW"/>
</dbReference>
<dbReference type="GO" id="GO:0006397">
    <property type="term" value="P:mRNA processing"/>
    <property type="evidence" value="ECO:0007669"/>
    <property type="project" value="UniProtKB-KW"/>
</dbReference>
<dbReference type="GO" id="GO:0008380">
    <property type="term" value="P:RNA splicing"/>
    <property type="evidence" value="ECO:0007669"/>
    <property type="project" value="UniProtKB-UniRule"/>
</dbReference>
<dbReference type="GO" id="GO:0008033">
    <property type="term" value="P:tRNA processing"/>
    <property type="evidence" value="ECO:0007669"/>
    <property type="project" value="UniProtKB-KW"/>
</dbReference>
<dbReference type="HAMAP" id="MF_01390">
    <property type="entry name" value="MatK"/>
    <property type="match status" value="1"/>
</dbReference>
<dbReference type="InterPro" id="IPR024937">
    <property type="entry name" value="Domain_X"/>
</dbReference>
<dbReference type="InterPro" id="IPR002866">
    <property type="entry name" value="Maturase_MatK"/>
</dbReference>
<dbReference type="InterPro" id="IPR024942">
    <property type="entry name" value="Maturase_MatK_N"/>
</dbReference>
<dbReference type="PANTHER" id="PTHR34811">
    <property type="entry name" value="MATURASE K"/>
    <property type="match status" value="1"/>
</dbReference>
<dbReference type="PANTHER" id="PTHR34811:SF1">
    <property type="entry name" value="MATURASE K"/>
    <property type="match status" value="1"/>
</dbReference>
<dbReference type="Pfam" id="PF01348">
    <property type="entry name" value="Intron_maturas2"/>
    <property type="match status" value="1"/>
</dbReference>
<dbReference type="Pfam" id="PF01824">
    <property type="entry name" value="MatK_N"/>
    <property type="match status" value="1"/>
</dbReference>
<organism>
    <name type="scientific">Amburana cearensis</name>
    <name type="common">Cerejeira</name>
    <name type="synonym">Torresea cearensis</name>
    <dbReference type="NCBI Taxonomy" id="149628"/>
    <lineage>
        <taxon>Eukaryota</taxon>
        <taxon>Viridiplantae</taxon>
        <taxon>Streptophyta</taxon>
        <taxon>Embryophyta</taxon>
        <taxon>Tracheophyta</taxon>
        <taxon>Spermatophyta</taxon>
        <taxon>Magnoliopsida</taxon>
        <taxon>eudicotyledons</taxon>
        <taxon>Gunneridae</taxon>
        <taxon>Pentapetalae</taxon>
        <taxon>rosids</taxon>
        <taxon>fabids</taxon>
        <taxon>Fabales</taxon>
        <taxon>Fabaceae</taxon>
        <taxon>Papilionoideae</taxon>
        <taxon>ADA clade</taxon>
        <taxon>Amburaneae</taxon>
        <taxon>Amburana</taxon>
    </lineage>
</organism>
<comment type="function">
    <text evidence="1">Usually encoded in the trnK tRNA gene intron. Probably assists in splicing its own and other chloroplast group II introns.</text>
</comment>
<comment type="subcellular location">
    <subcellularLocation>
        <location>Plastid</location>
        <location>Chloroplast</location>
    </subcellularLocation>
</comment>
<comment type="similarity">
    <text evidence="1">Belongs to the intron maturase 2 family. MatK subfamily.</text>
</comment>
<accession>Q6Q7X3</accession>
<gene>
    <name evidence="1" type="primary">matK</name>
</gene>
<reference key="1">
    <citation type="submission" date="2004-02" db="EMBL/GenBank/DDBJ databases">
        <title>Phylogenetic analyses of Papilionoideae (family Fabaceae) using sequences of the plastid matK gene.</title>
        <authorList>
            <person name="Wojciechowski M.F."/>
            <person name="Pennington R.T."/>
        </authorList>
    </citation>
    <scope>NUCLEOTIDE SEQUENCE [GENOMIC DNA]</scope>
</reference>
<keyword id="KW-0150">Chloroplast</keyword>
<keyword id="KW-0507">mRNA processing</keyword>
<keyword id="KW-0934">Plastid</keyword>
<keyword id="KW-0694">RNA-binding</keyword>
<keyword id="KW-0819">tRNA processing</keyword>
<sequence>MEEYQVHLELDRSRQQDFLYPLIFREYIYGLAYGHDLNSSILVENGGYDNKSSLLIVKRLITRMYQQNHFLFSANDSNKNPFWGYNKNLYSQIISEGFAVVVEIPLSLQLSSSLEEAEIVKSYNNLRSIHSIFPFFEDKFTYLNYVSDVRIPYPIHLEILVQTLRYWVKDAPFFHLVRLFLYEYCNWNSLITPKKSISTFSKSNPRFLLFLYNFYVYEYESIFLFLRNKSSHLRLPSFSVLFERIYFYAKIEHQHLVEVFAKDFSSTLLFFKDPFIHYVRYQGKSILASKNAPFLMNKWKYYFILLWQCHFYVWSQPGAIHITQLSEHSFDFLGYFSNVRLNASVVRSQMLENSFIIEILMKKLDTIVPIILLIRSLAKAKFCNVLGHPISKPVWSDSSDFDIIDRFLRICRNLSHYYNGSSKKKSLYRIKYILRLSCIKTLARKHKSTVRAFLKGLGSEELLEEFFTEEEEILSLIFPRVSSTLQRLYRGRIWYLDIIFINDLVNRE</sequence>
<protein>
    <recommendedName>
        <fullName evidence="1">Maturase K</fullName>
    </recommendedName>
    <alternativeName>
        <fullName evidence="1">Intron maturase</fullName>
    </alternativeName>
</protein>